<organism>
    <name type="scientific">Ehrlichia ruminantium (strain Gardel)</name>
    <dbReference type="NCBI Taxonomy" id="302409"/>
    <lineage>
        <taxon>Bacteria</taxon>
        <taxon>Pseudomonadati</taxon>
        <taxon>Pseudomonadota</taxon>
        <taxon>Alphaproteobacteria</taxon>
        <taxon>Rickettsiales</taxon>
        <taxon>Anaplasmataceae</taxon>
        <taxon>Ehrlichia</taxon>
    </lineage>
</organism>
<protein>
    <recommendedName>
        <fullName evidence="1">Large ribosomal subunit protein bL36</fullName>
    </recommendedName>
    <alternativeName>
        <fullName evidence="2">50S ribosomal protein L36</fullName>
    </alternativeName>
</protein>
<proteinExistence type="inferred from homology"/>
<gene>
    <name evidence="1" type="primary">rpmJ</name>
    <name type="ordered locus">ERGA_CDS_04030</name>
</gene>
<comment type="similarity">
    <text evidence="1">Belongs to the bacterial ribosomal protein bL36 family.</text>
</comment>
<feature type="chain" id="PRO_0000302200" description="Large ribosomal subunit protein bL36">
    <location>
        <begin position="1"/>
        <end position="42"/>
    </location>
</feature>
<accession>Q5FH38</accession>
<sequence length="42" mass="4978">MKVIGSLKSAKIRDKDCRVVRRKGRIYVINKKNPRFKARQGY</sequence>
<keyword id="KW-0687">Ribonucleoprotein</keyword>
<keyword id="KW-0689">Ribosomal protein</keyword>
<dbReference type="EMBL" id="CR925677">
    <property type="protein sequence ID" value="CAI27855.1"/>
    <property type="molecule type" value="Genomic_DNA"/>
</dbReference>
<dbReference type="SMR" id="Q5FH38"/>
<dbReference type="KEGG" id="erg:ERGA_CDS_04030"/>
<dbReference type="HOGENOM" id="CLU_135723_3_2_5"/>
<dbReference type="OrthoDB" id="9801558at2"/>
<dbReference type="Proteomes" id="UP000000533">
    <property type="component" value="Chromosome"/>
</dbReference>
<dbReference type="GO" id="GO:1990904">
    <property type="term" value="C:ribonucleoprotein complex"/>
    <property type="evidence" value="ECO:0007669"/>
    <property type="project" value="UniProtKB-KW"/>
</dbReference>
<dbReference type="GO" id="GO:0005840">
    <property type="term" value="C:ribosome"/>
    <property type="evidence" value="ECO:0007669"/>
    <property type="project" value="UniProtKB-KW"/>
</dbReference>
<dbReference type="GO" id="GO:0003735">
    <property type="term" value="F:structural constituent of ribosome"/>
    <property type="evidence" value="ECO:0007669"/>
    <property type="project" value="InterPro"/>
</dbReference>
<dbReference type="GO" id="GO:0006412">
    <property type="term" value="P:translation"/>
    <property type="evidence" value="ECO:0007669"/>
    <property type="project" value="UniProtKB-UniRule"/>
</dbReference>
<dbReference type="HAMAP" id="MF_00251">
    <property type="entry name" value="Ribosomal_bL36"/>
    <property type="match status" value="1"/>
</dbReference>
<dbReference type="InterPro" id="IPR000473">
    <property type="entry name" value="Ribosomal_bL36"/>
</dbReference>
<dbReference type="InterPro" id="IPR035977">
    <property type="entry name" value="Ribosomal_bL36_sp"/>
</dbReference>
<dbReference type="InterPro" id="IPR047621">
    <property type="entry name" value="Ribosomal_L36_bact"/>
</dbReference>
<dbReference type="NCBIfam" id="NF002021">
    <property type="entry name" value="PRK00831.1"/>
    <property type="match status" value="1"/>
</dbReference>
<dbReference type="NCBIfam" id="TIGR01022">
    <property type="entry name" value="rpmJ_bact"/>
    <property type="match status" value="1"/>
</dbReference>
<dbReference type="PANTHER" id="PTHR47781">
    <property type="entry name" value="50S RIBOSOMAL PROTEIN L36 2"/>
    <property type="match status" value="1"/>
</dbReference>
<dbReference type="PANTHER" id="PTHR47781:SF1">
    <property type="entry name" value="LARGE RIBOSOMAL SUBUNIT PROTEIN BL36B"/>
    <property type="match status" value="1"/>
</dbReference>
<dbReference type="Pfam" id="PF00444">
    <property type="entry name" value="Ribosomal_L36"/>
    <property type="match status" value="1"/>
</dbReference>
<dbReference type="SUPFAM" id="SSF57840">
    <property type="entry name" value="Ribosomal protein L36"/>
    <property type="match status" value="1"/>
</dbReference>
<dbReference type="PROSITE" id="PS00828">
    <property type="entry name" value="RIBOSOMAL_L36"/>
    <property type="match status" value="1"/>
</dbReference>
<reference key="1">
    <citation type="journal article" date="2006" name="J. Bacteriol.">
        <title>Comparative genomic analysis of three strains of Ehrlichia ruminantium reveals an active process of genome size plasticity.</title>
        <authorList>
            <person name="Frutos R."/>
            <person name="Viari A."/>
            <person name="Ferraz C."/>
            <person name="Morgat A."/>
            <person name="Eychenie S."/>
            <person name="Kandassamy Y."/>
            <person name="Chantal I."/>
            <person name="Bensaid A."/>
            <person name="Coissac E."/>
            <person name="Vachiery N."/>
            <person name="Demaille J."/>
            <person name="Martinez D."/>
        </authorList>
    </citation>
    <scope>NUCLEOTIDE SEQUENCE [LARGE SCALE GENOMIC DNA]</scope>
    <source>
        <strain>Gardel</strain>
    </source>
</reference>
<evidence type="ECO:0000255" key="1">
    <source>
        <dbReference type="HAMAP-Rule" id="MF_00251"/>
    </source>
</evidence>
<evidence type="ECO:0000305" key="2"/>
<name>RL36_EHRRG</name>